<dbReference type="EC" id="4.6.1.17" evidence="1"/>
<dbReference type="EMBL" id="CP001364">
    <property type="protein sequence ID" value="ACM52258.1"/>
    <property type="molecule type" value="Genomic_DNA"/>
</dbReference>
<dbReference type="SMR" id="B9LKK2"/>
<dbReference type="KEGG" id="chl:Chy400_0829"/>
<dbReference type="HOGENOM" id="CLU_074693_1_1_0"/>
<dbReference type="OrthoDB" id="9794429at2"/>
<dbReference type="UniPathway" id="UPA00344"/>
<dbReference type="GO" id="GO:0061799">
    <property type="term" value="F:cyclic pyranopterin monophosphate synthase activity"/>
    <property type="evidence" value="ECO:0007669"/>
    <property type="project" value="UniProtKB-UniRule"/>
</dbReference>
<dbReference type="GO" id="GO:0006777">
    <property type="term" value="P:Mo-molybdopterin cofactor biosynthetic process"/>
    <property type="evidence" value="ECO:0007669"/>
    <property type="project" value="UniProtKB-UniRule"/>
</dbReference>
<dbReference type="CDD" id="cd01420">
    <property type="entry name" value="MoaC_PE"/>
    <property type="match status" value="1"/>
</dbReference>
<dbReference type="Gene3D" id="3.30.70.640">
    <property type="entry name" value="Molybdopterin cofactor biosynthesis C (MoaC) domain"/>
    <property type="match status" value="1"/>
</dbReference>
<dbReference type="HAMAP" id="MF_01224_B">
    <property type="entry name" value="MoaC_B"/>
    <property type="match status" value="1"/>
</dbReference>
<dbReference type="InterPro" id="IPR023045">
    <property type="entry name" value="MoaC"/>
</dbReference>
<dbReference type="InterPro" id="IPR047594">
    <property type="entry name" value="MoaC_bact/euk"/>
</dbReference>
<dbReference type="InterPro" id="IPR036522">
    <property type="entry name" value="MoaC_sf"/>
</dbReference>
<dbReference type="InterPro" id="IPR050105">
    <property type="entry name" value="MoCo_biosynth_MoaA/MoaC"/>
</dbReference>
<dbReference type="InterPro" id="IPR002820">
    <property type="entry name" value="Mopterin_CF_biosynth-C_dom"/>
</dbReference>
<dbReference type="NCBIfam" id="TIGR00581">
    <property type="entry name" value="moaC"/>
    <property type="match status" value="1"/>
</dbReference>
<dbReference type="NCBIfam" id="NF006870">
    <property type="entry name" value="PRK09364.1"/>
    <property type="match status" value="1"/>
</dbReference>
<dbReference type="PANTHER" id="PTHR22960:SF29">
    <property type="entry name" value="CYCLIC PYRANOPTERIN MONOPHOSPHATE SYNTHASE"/>
    <property type="match status" value="1"/>
</dbReference>
<dbReference type="PANTHER" id="PTHR22960">
    <property type="entry name" value="MOLYBDOPTERIN COFACTOR SYNTHESIS PROTEIN A"/>
    <property type="match status" value="1"/>
</dbReference>
<dbReference type="Pfam" id="PF01967">
    <property type="entry name" value="MoaC"/>
    <property type="match status" value="1"/>
</dbReference>
<dbReference type="SUPFAM" id="SSF55040">
    <property type="entry name" value="Molybdenum cofactor biosynthesis protein C, MoaC"/>
    <property type="match status" value="1"/>
</dbReference>
<comment type="function">
    <text evidence="1">Catalyzes the conversion of (8S)-3',8-cyclo-7,8-dihydroguanosine 5'-triphosphate to cyclic pyranopterin monophosphate (cPMP).</text>
</comment>
<comment type="catalytic activity">
    <reaction evidence="1">
        <text>(8S)-3',8-cyclo-7,8-dihydroguanosine 5'-triphosphate = cyclic pyranopterin phosphate + diphosphate</text>
        <dbReference type="Rhea" id="RHEA:49580"/>
        <dbReference type="ChEBI" id="CHEBI:33019"/>
        <dbReference type="ChEBI" id="CHEBI:59648"/>
        <dbReference type="ChEBI" id="CHEBI:131766"/>
        <dbReference type="EC" id="4.6.1.17"/>
    </reaction>
</comment>
<comment type="pathway">
    <text evidence="1">Cofactor biosynthesis; molybdopterin biosynthesis.</text>
</comment>
<comment type="subunit">
    <text evidence="1">Homohexamer; trimer of dimers.</text>
</comment>
<comment type="similarity">
    <text evidence="1">Belongs to the MoaC family.</text>
</comment>
<accession>B9LKK2</accession>
<organism>
    <name type="scientific">Chloroflexus aurantiacus (strain ATCC 29364 / DSM 637 / Y-400-fl)</name>
    <dbReference type="NCBI Taxonomy" id="480224"/>
    <lineage>
        <taxon>Bacteria</taxon>
        <taxon>Bacillati</taxon>
        <taxon>Chloroflexota</taxon>
        <taxon>Chloroflexia</taxon>
        <taxon>Chloroflexales</taxon>
        <taxon>Chloroflexineae</taxon>
        <taxon>Chloroflexaceae</taxon>
        <taxon>Chloroflexus</taxon>
    </lineage>
</organism>
<evidence type="ECO:0000255" key="1">
    <source>
        <dbReference type="HAMAP-Rule" id="MF_01224"/>
    </source>
</evidence>
<proteinExistence type="inferred from homology"/>
<feature type="chain" id="PRO_1000213984" description="Cyclic pyranopterin monophosphate synthase">
    <location>
        <begin position="1"/>
        <end position="163"/>
    </location>
</feature>
<feature type="active site" evidence="1">
    <location>
        <position position="132"/>
    </location>
</feature>
<feature type="binding site" evidence="1">
    <location>
        <begin position="79"/>
        <end position="81"/>
    </location>
    <ligand>
        <name>substrate</name>
    </ligand>
</feature>
<feature type="binding site" evidence="1">
    <location>
        <begin position="117"/>
        <end position="118"/>
    </location>
    <ligand>
        <name>substrate</name>
    </ligand>
</feature>
<name>MOAC_CHLSY</name>
<sequence length="163" mass="17507">MSEAHNELTHLDAAGHARMVDVGDKAVTAREAVARGRVVMQPETLALIMDGKLPKGDVLAVARVAGIMAAKRTAELIPLCHLLNLSHASVQFTPDPASNALEIEATVRCQGQTGVEMEALTAVSIAALTIYDMCKAVDKTMQIDQIRLIAKRGGRSGDWQRPR</sequence>
<keyword id="KW-0456">Lyase</keyword>
<keyword id="KW-0501">Molybdenum cofactor biosynthesis</keyword>
<reference key="1">
    <citation type="submission" date="2009-01" db="EMBL/GenBank/DDBJ databases">
        <title>Complete sequence of Chloroflexus sp. Y-400-fl.</title>
        <authorList>
            <consortium name="US DOE Joint Genome Institute"/>
            <person name="Lucas S."/>
            <person name="Copeland A."/>
            <person name="Lapidus A."/>
            <person name="Glavina del Rio T."/>
            <person name="Dalin E."/>
            <person name="Tice H."/>
            <person name="Bruce D."/>
            <person name="Goodwin L."/>
            <person name="Pitluck S."/>
            <person name="Sims D."/>
            <person name="Kiss H."/>
            <person name="Brettin T."/>
            <person name="Detter J.C."/>
            <person name="Han C."/>
            <person name="Larimer F."/>
            <person name="Land M."/>
            <person name="Hauser L."/>
            <person name="Kyrpides N."/>
            <person name="Ovchinnikova G."/>
            <person name="Bryant D.A."/>
            <person name="Richardson P."/>
        </authorList>
    </citation>
    <scope>NUCLEOTIDE SEQUENCE [LARGE SCALE GENOMIC DNA]</scope>
    <source>
        <strain>ATCC 29364 / DSM 637 / Y-400-fl</strain>
    </source>
</reference>
<gene>
    <name evidence="1" type="primary">moaC</name>
    <name type="ordered locus">Chy400_0829</name>
</gene>
<protein>
    <recommendedName>
        <fullName evidence="1">Cyclic pyranopterin monophosphate synthase</fullName>
        <ecNumber evidence="1">4.6.1.17</ecNumber>
    </recommendedName>
    <alternativeName>
        <fullName evidence="1">Molybdenum cofactor biosynthesis protein C</fullName>
    </alternativeName>
</protein>